<gene>
    <name type="ordered locus">lmo0166</name>
</gene>
<accession>Q8YAG0</accession>
<reference key="1">
    <citation type="journal article" date="2001" name="Science">
        <title>Comparative genomics of Listeria species.</title>
        <authorList>
            <person name="Glaser P."/>
            <person name="Frangeul L."/>
            <person name="Buchrieser C."/>
            <person name="Rusniok C."/>
            <person name="Amend A."/>
            <person name="Baquero F."/>
            <person name="Berche P."/>
            <person name="Bloecker H."/>
            <person name="Brandt P."/>
            <person name="Chakraborty T."/>
            <person name="Charbit A."/>
            <person name="Chetouani F."/>
            <person name="Couve E."/>
            <person name="de Daruvar A."/>
            <person name="Dehoux P."/>
            <person name="Domann E."/>
            <person name="Dominguez-Bernal G."/>
            <person name="Duchaud E."/>
            <person name="Durant L."/>
            <person name="Dussurget O."/>
            <person name="Entian K.-D."/>
            <person name="Fsihi H."/>
            <person name="Garcia-del Portillo F."/>
            <person name="Garrido P."/>
            <person name="Gautier L."/>
            <person name="Goebel W."/>
            <person name="Gomez-Lopez N."/>
            <person name="Hain T."/>
            <person name="Hauf J."/>
            <person name="Jackson D."/>
            <person name="Jones L.-M."/>
            <person name="Kaerst U."/>
            <person name="Kreft J."/>
            <person name="Kuhn M."/>
            <person name="Kunst F."/>
            <person name="Kurapkat G."/>
            <person name="Madueno E."/>
            <person name="Maitournam A."/>
            <person name="Mata Vicente J."/>
            <person name="Ng E."/>
            <person name="Nedjari H."/>
            <person name="Nordsiek G."/>
            <person name="Novella S."/>
            <person name="de Pablos B."/>
            <person name="Perez-Diaz J.-C."/>
            <person name="Purcell R."/>
            <person name="Remmel B."/>
            <person name="Rose M."/>
            <person name="Schlueter T."/>
            <person name="Simoes N."/>
            <person name="Tierrez A."/>
            <person name="Vazquez-Boland J.-A."/>
            <person name="Voss H."/>
            <person name="Wehland J."/>
            <person name="Cossart P."/>
        </authorList>
    </citation>
    <scope>NUCLEOTIDE SEQUENCE [LARGE SCALE GENOMIC DNA]</scope>
    <source>
        <strain>ATCC BAA-679 / EGD-e</strain>
    </source>
</reference>
<sequence>MAKASEHFFYVLKCSDNSYYGGYTTDVLRREAEHNAGIRCKYTKTRRPVKVIHFEKFETRSEATKAEAAFKKLSRKNKDAYLIQREEESE</sequence>
<proteinExistence type="inferred from homology"/>
<name>Y166_LISMO</name>
<protein>
    <recommendedName>
        <fullName>UPF0213 protein lmo0166</fullName>
    </recommendedName>
</protein>
<evidence type="ECO:0000255" key="1">
    <source>
        <dbReference type="PROSITE-ProRule" id="PRU00977"/>
    </source>
</evidence>
<evidence type="ECO:0000305" key="2"/>
<feature type="chain" id="PRO_0000161368" description="UPF0213 protein lmo0166">
    <location>
        <begin position="1"/>
        <end position="90"/>
    </location>
</feature>
<feature type="domain" description="GIY-YIG" evidence="1">
    <location>
        <begin position="5"/>
        <end position="80"/>
    </location>
</feature>
<comment type="similarity">
    <text evidence="2">Belongs to the UPF0213 family.</text>
</comment>
<dbReference type="EMBL" id="AL591973">
    <property type="protein sequence ID" value="CAC98381.1"/>
    <property type="molecule type" value="Genomic_DNA"/>
</dbReference>
<dbReference type="PIR" id="AG1095">
    <property type="entry name" value="AG1095"/>
</dbReference>
<dbReference type="RefSeq" id="NP_463699.1">
    <property type="nucleotide sequence ID" value="NC_003210.1"/>
</dbReference>
<dbReference type="RefSeq" id="WP_003723493.1">
    <property type="nucleotide sequence ID" value="NZ_CP149495.1"/>
</dbReference>
<dbReference type="SMR" id="Q8YAG0"/>
<dbReference type="STRING" id="169963.gene:17592802"/>
<dbReference type="PaxDb" id="169963-lmo0166"/>
<dbReference type="EnsemblBacteria" id="CAC98381">
    <property type="protein sequence ID" value="CAC98381"/>
    <property type="gene ID" value="CAC98381"/>
</dbReference>
<dbReference type="GeneID" id="986878"/>
<dbReference type="KEGG" id="lmo:lmo0166"/>
<dbReference type="PATRIC" id="fig|169963.11.peg.169"/>
<dbReference type="eggNOG" id="COG2827">
    <property type="taxonomic scope" value="Bacteria"/>
</dbReference>
<dbReference type="HOGENOM" id="CLU_135650_0_3_9"/>
<dbReference type="OrthoDB" id="9807770at2"/>
<dbReference type="PhylomeDB" id="Q8YAG0"/>
<dbReference type="BioCyc" id="LMON169963:LMO0166-MONOMER"/>
<dbReference type="Proteomes" id="UP000000817">
    <property type="component" value="Chromosome"/>
</dbReference>
<dbReference type="CDD" id="cd10456">
    <property type="entry name" value="GIY-YIG_UPF0213"/>
    <property type="match status" value="1"/>
</dbReference>
<dbReference type="Gene3D" id="3.40.1440.10">
    <property type="entry name" value="GIY-YIG endonuclease"/>
    <property type="match status" value="1"/>
</dbReference>
<dbReference type="InterPro" id="IPR000305">
    <property type="entry name" value="GIY-YIG_endonuc"/>
</dbReference>
<dbReference type="InterPro" id="IPR035901">
    <property type="entry name" value="GIY-YIG_endonuc_sf"/>
</dbReference>
<dbReference type="InterPro" id="IPR050190">
    <property type="entry name" value="UPF0213_domain"/>
</dbReference>
<dbReference type="PANTHER" id="PTHR34477">
    <property type="entry name" value="UPF0213 PROTEIN YHBQ"/>
    <property type="match status" value="1"/>
</dbReference>
<dbReference type="PANTHER" id="PTHR34477:SF1">
    <property type="entry name" value="UPF0213 PROTEIN YHBQ"/>
    <property type="match status" value="1"/>
</dbReference>
<dbReference type="Pfam" id="PF01541">
    <property type="entry name" value="GIY-YIG"/>
    <property type="match status" value="1"/>
</dbReference>
<dbReference type="SUPFAM" id="SSF82771">
    <property type="entry name" value="GIY-YIG endonuclease"/>
    <property type="match status" value="1"/>
</dbReference>
<dbReference type="PROSITE" id="PS50164">
    <property type="entry name" value="GIY_YIG"/>
    <property type="match status" value="1"/>
</dbReference>
<organism>
    <name type="scientific">Listeria monocytogenes serovar 1/2a (strain ATCC BAA-679 / EGD-e)</name>
    <dbReference type="NCBI Taxonomy" id="169963"/>
    <lineage>
        <taxon>Bacteria</taxon>
        <taxon>Bacillati</taxon>
        <taxon>Bacillota</taxon>
        <taxon>Bacilli</taxon>
        <taxon>Bacillales</taxon>
        <taxon>Listeriaceae</taxon>
        <taxon>Listeria</taxon>
    </lineage>
</organism>
<keyword id="KW-1185">Reference proteome</keyword>